<proteinExistence type="uncertain"/>
<name>YCF15_CAPBU</name>
<organism>
    <name type="scientific">Capsella bursa-pastoris</name>
    <name type="common">Shepherd's purse</name>
    <name type="synonym">Thlaspi bursa-pastoris</name>
    <dbReference type="NCBI Taxonomy" id="3719"/>
    <lineage>
        <taxon>Eukaryota</taxon>
        <taxon>Viridiplantae</taxon>
        <taxon>Streptophyta</taxon>
        <taxon>Embryophyta</taxon>
        <taxon>Tracheophyta</taxon>
        <taxon>Spermatophyta</taxon>
        <taxon>Magnoliopsida</taxon>
        <taxon>eudicotyledons</taxon>
        <taxon>Gunneridae</taxon>
        <taxon>Pentapetalae</taxon>
        <taxon>rosids</taxon>
        <taxon>malvids</taxon>
        <taxon>Brassicales</taxon>
        <taxon>Brassicaceae</taxon>
        <taxon>Camelineae</taxon>
        <taxon>Capsella</taxon>
    </lineage>
</organism>
<sequence length="77" mass="9062">MLLLKHGRIEILDQNTMYGWYELPKQEFLNSEQPELLLTTSKKFPLIKDGNPLENQKYACWMKLLLLSVPITNQLNN</sequence>
<gene>
    <name type="primary">ycf15-A</name>
</gene>
<gene>
    <name type="primary">ycf15-B</name>
</gene>
<comment type="subcellular location">
    <subcellularLocation>
        <location>Plastid</location>
        <location>Chloroplast</location>
    </subcellularLocation>
</comment>
<comment type="similarity">
    <text evidence="1">Belongs to the ycf15 family.</text>
</comment>
<comment type="caution">
    <text evidence="1">Could be the product of a pseudogene.</text>
</comment>
<protein>
    <recommendedName>
        <fullName>Putative uncharacterized protein ycf15</fullName>
    </recommendedName>
    <alternativeName>
        <fullName>Orf77</fullName>
    </alternativeName>
</protein>
<feature type="chain" id="PRO_0000360378" description="Putative uncharacterized protein ycf15">
    <location>
        <begin position="1"/>
        <end position="77"/>
    </location>
</feature>
<keyword id="KW-0150">Chloroplast</keyword>
<keyword id="KW-0934">Plastid</keyword>
<accession>A4QKN6</accession>
<dbReference type="EMBL" id="AP009371">
    <property type="protein sequence ID" value="BAF50241.1"/>
    <property type="molecule type" value="Genomic_DNA"/>
</dbReference>
<dbReference type="EMBL" id="AP009371">
    <property type="protein sequence ID" value="BAF50262.1"/>
    <property type="molecule type" value="Genomic_DNA"/>
</dbReference>
<dbReference type="GO" id="GO:0009507">
    <property type="term" value="C:chloroplast"/>
    <property type="evidence" value="ECO:0007669"/>
    <property type="project" value="UniProtKB-SubCell"/>
</dbReference>
<dbReference type="InterPro" id="IPR019645">
    <property type="entry name" value="Uncharacterised_Ycf15"/>
</dbReference>
<dbReference type="Pfam" id="PF10705">
    <property type="entry name" value="Ycf15"/>
    <property type="match status" value="1"/>
</dbReference>
<geneLocation type="chloroplast"/>
<evidence type="ECO:0000305" key="1"/>
<reference key="1">
    <citation type="submission" date="2007-03" db="EMBL/GenBank/DDBJ databases">
        <title>Sequencing analysis of Capsella bursa-pastoris JO22 chloroplast DNA.</title>
        <authorList>
            <person name="Hosouchi T."/>
            <person name="Tsuruoka H."/>
            <person name="Kotani H."/>
        </authorList>
    </citation>
    <scope>NUCLEOTIDE SEQUENCE [LARGE SCALE GENOMIC DNA]</scope>
    <source>
        <strain>JO22</strain>
    </source>
</reference>